<sequence>MSASDLTSVQAGAPQGRRQILVTSALPYANGQIHIGHLVEYIQTDIWVRTMRMHGHEIYYIGADDTHGTPVMLRAEQEGVSPKQLIERVWREHKRDFDSFGVSFDNFYTTDSDENRVLSETIYLALKEAGFIAEREIEQAYDPVRQMFLPDRFIKGECPKCHAKDQYGDSCEVCGTTYQPTDLIHPYSVVSGAAPVRKTSTHYFFRLSDPRCEAFLREWVSGLAQPEATNKMREWLGEAGEAKLADWDISRDAPYFGFEIPGAPGKYFYVWLDAPVGYYASFKNLCQRRGLDFDAWIRKDSTTEQYHFIGKDILYFHTLFWPAMLEFSGHRTPTNVFAHGFLTVDGAKMSKSRGTFITAQSYIDTGLNPEWLRYYFAAKLNATMEDIDLNLEDFQARVNSDLVGKYVNIASRAAGFLLKRFDGRVQASAMNHPLLATLRGAIPQIAAHYEAREYGRALRQTMELADAVNGYVDSAKPWELAKDPANAVALHETCSVSLEAFRLLSLALKPVLPRVAQGVEAFLGIAPLTWADAGTPLSPEQPVRAYQHLMTRVDPKQIDALLAANRGSLQGTAAAAEAGAANGNGAGSKNGKGAKAAAQPAASAANADDGASPIISIDDFAKIDLRIAKIVACQAVEGSDKLLQLTLDVGEERTRNVFSGIKSAYRPEQLVGKLTVMVANLAPRKMKFGLSEGMVLAASAADEKAEPGLYILEPHSGAKPGMRVK</sequence>
<organism>
    <name type="scientific">Burkholderia mallei (strain NCTC 10247)</name>
    <dbReference type="NCBI Taxonomy" id="320389"/>
    <lineage>
        <taxon>Bacteria</taxon>
        <taxon>Pseudomonadati</taxon>
        <taxon>Pseudomonadota</taxon>
        <taxon>Betaproteobacteria</taxon>
        <taxon>Burkholderiales</taxon>
        <taxon>Burkholderiaceae</taxon>
        <taxon>Burkholderia</taxon>
        <taxon>pseudomallei group</taxon>
    </lineage>
</organism>
<proteinExistence type="inferred from homology"/>
<evidence type="ECO:0000255" key="1">
    <source>
        <dbReference type="HAMAP-Rule" id="MF_00098"/>
    </source>
</evidence>
<evidence type="ECO:0000305" key="2"/>
<name>SYM_BURM7</name>
<dbReference type="EC" id="6.1.1.10" evidence="1"/>
<dbReference type="EMBL" id="CP000548">
    <property type="protein sequence ID" value="ABO06727.1"/>
    <property type="status" value="ALT_INIT"/>
    <property type="molecule type" value="Genomic_DNA"/>
</dbReference>
<dbReference type="RefSeq" id="WP_011203868.1">
    <property type="nucleotide sequence ID" value="NZ_CP007802.1"/>
</dbReference>
<dbReference type="SMR" id="A3MLM5"/>
<dbReference type="GeneID" id="92978470"/>
<dbReference type="KEGG" id="bmaz:BM44_1557"/>
<dbReference type="KEGG" id="bmn:BMA10247_1617"/>
<dbReference type="PATRIC" id="fig|320389.8.peg.1739"/>
<dbReference type="GO" id="GO:0005829">
    <property type="term" value="C:cytosol"/>
    <property type="evidence" value="ECO:0007669"/>
    <property type="project" value="TreeGrafter"/>
</dbReference>
<dbReference type="GO" id="GO:0005524">
    <property type="term" value="F:ATP binding"/>
    <property type="evidence" value="ECO:0007669"/>
    <property type="project" value="UniProtKB-UniRule"/>
</dbReference>
<dbReference type="GO" id="GO:0046872">
    <property type="term" value="F:metal ion binding"/>
    <property type="evidence" value="ECO:0007669"/>
    <property type="project" value="UniProtKB-KW"/>
</dbReference>
<dbReference type="GO" id="GO:0004825">
    <property type="term" value="F:methionine-tRNA ligase activity"/>
    <property type="evidence" value="ECO:0007669"/>
    <property type="project" value="UniProtKB-UniRule"/>
</dbReference>
<dbReference type="GO" id="GO:0000049">
    <property type="term" value="F:tRNA binding"/>
    <property type="evidence" value="ECO:0007669"/>
    <property type="project" value="UniProtKB-KW"/>
</dbReference>
<dbReference type="GO" id="GO:0006431">
    <property type="term" value="P:methionyl-tRNA aminoacylation"/>
    <property type="evidence" value="ECO:0007669"/>
    <property type="project" value="UniProtKB-UniRule"/>
</dbReference>
<dbReference type="CDD" id="cd07957">
    <property type="entry name" value="Anticodon_Ia_Met"/>
    <property type="match status" value="1"/>
</dbReference>
<dbReference type="CDD" id="cd00814">
    <property type="entry name" value="MetRS_core"/>
    <property type="match status" value="1"/>
</dbReference>
<dbReference type="CDD" id="cd02800">
    <property type="entry name" value="tRNA_bind_EcMetRS_like"/>
    <property type="match status" value="1"/>
</dbReference>
<dbReference type="FunFam" id="2.20.28.20:FF:000001">
    <property type="entry name" value="Methionine--tRNA ligase"/>
    <property type="match status" value="1"/>
</dbReference>
<dbReference type="FunFam" id="2.40.50.140:FF:000042">
    <property type="entry name" value="Methionine--tRNA ligase"/>
    <property type="match status" value="1"/>
</dbReference>
<dbReference type="Gene3D" id="3.40.50.620">
    <property type="entry name" value="HUPs"/>
    <property type="match status" value="1"/>
</dbReference>
<dbReference type="Gene3D" id="1.10.730.10">
    <property type="entry name" value="Isoleucyl-tRNA Synthetase, Domain 1"/>
    <property type="match status" value="1"/>
</dbReference>
<dbReference type="Gene3D" id="2.20.28.20">
    <property type="entry name" value="Methionyl-tRNA synthetase, Zn-domain"/>
    <property type="match status" value="1"/>
</dbReference>
<dbReference type="Gene3D" id="2.40.50.140">
    <property type="entry name" value="Nucleic acid-binding proteins"/>
    <property type="match status" value="1"/>
</dbReference>
<dbReference type="HAMAP" id="MF_00098">
    <property type="entry name" value="Met_tRNA_synth_type1"/>
    <property type="match status" value="1"/>
</dbReference>
<dbReference type="InterPro" id="IPR001412">
    <property type="entry name" value="aa-tRNA-synth_I_CS"/>
</dbReference>
<dbReference type="InterPro" id="IPR041872">
    <property type="entry name" value="Anticodon_Met"/>
</dbReference>
<dbReference type="InterPro" id="IPR004495">
    <property type="entry name" value="Met-tRNA-synth_bsu_C"/>
</dbReference>
<dbReference type="InterPro" id="IPR023458">
    <property type="entry name" value="Met-tRNA_ligase_1"/>
</dbReference>
<dbReference type="InterPro" id="IPR014758">
    <property type="entry name" value="Met-tRNA_synth"/>
</dbReference>
<dbReference type="InterPro" id="IPR015413">
    <property type="entry name" value="Methionyl/Leucyl_tRNA_Synth"/>
</dbReference>
<dbReference type="InterPro" id="IPR033911">
    <property type="entry name" value="MetRS_core"/>
</dbReference>
<dbReference type="InterPro" id="IPR029038">
    <property type="entry name" value="MetRS_Zn"/>
</dbReference>
<dbReference type="InterPro" id="IPR012340">
    <property type="entry name" value="NA-bd_OB-fold"/>
</dbReference>
<dbReference type="InterPro" id="IPR014729">
    <property type="entry name" value="Rossmann-like_a/b/a_fold"/>
</dbReference>
<dbReference type="InterPro" id="IPR002547">
    <property type="entry name" value="tRNA-bd_dom"/>
</dbReference>
<dbReference type="InterPro" id="IPR009080">
    <property type="entry name" value="tRNAsynth_Ia_anticodon-bd"/>
</dbReference>
<dbReference type="NCBIfam" id="TIGR00398">
    <property type="entry name" value="metG"/>
    <property type="match status" value="1"/>
</dbReference>
<dbReference type="NCBIfam" id="TIGR00399">
    <property type="entry name" value="metG_C_term"/>
    <property type="match status" value="1"/>
</dbReference>
<dbReference type="NCBIfam" id="NF001100">
    <property type="entry name" value="PRK00133.1"/>
    <property type="match status" value="1"/>
</dbReference>
<dbReference type="PANTHER" id="PTHR45765">
    <property type="entry name" value="METHIONINE--TRNA LIGASE"/>
    <property type="match status" value="1"/>
</dbReference>
<dbReference type="PANTHER" id="PTHR45765:SF1">
    <property type="entry name" value="METHIONINE--TRNA LIGASE, CYTOPLASMIC"/>
    <property type="match status" value="1"/>
</dbReference>
<dbReference type="Pfam" id="PF19303">
    <property type="entry name" value="Anticodon_3"/>
    <property type="match status" value="1"/>
</dbReference>
<dbReference type="Pfam" id="PF09334">
    <property type="entry name" value="tRNA-synt_1g"/>
    <property type="match status" value="1"/>
</dbReference>
<dbReference type="Pfam" id="PF01588">
    <property type="entry name" value="tRNA_bind"/>
    <property type="match status" value="1"/>
</dbReference>
<dbReference type="PRINTS" id="PR01041">
    <property type="entry name" value="TRNASYNTHMET"/>
</dbReference>
<dbReference type="SUPFAM" id="SSF47323">
    <property type="entry name" value="Anticodon-binding domain of a subclass of class I aminoacyl-tRNA synthetases"/>
    <property type="match status" value="1"/>
</dbReference>
<dbReference type="SUPFAM" id="SSF57770">
    <property type="entry name" value="Methionyl-tRNA synthetase (MetRS), Zn-domain"/>
    <property type="match status" value="1"/>
</dbReference>
<dbReference type="SUPFAM" id="SSF50249">
    <property type="entry name" value="Nucleic acid-binding proteins"/>
    <property type="match status" value="1"/>
</dbReference>
<dbReference type="SUPFAM" id="SSF52374">
    <property type="entry name" value="Nucleotidylyl transferase"/>
    <property type="match status" value="1"/>
</dbReference>
<dbReference type="PROSITE" id="PS00178">
    <property type="entry name" value="AA_TRNA_LIGASE_I"/>
    <property type="match status" value="1"/>
</dbReference>
<dbReference type="PROSITE" id="PS50886">
    <property type="entry name" value="TRBD"/>
    <property type="match status" value="1"/>
</dbReference>
<gene>
    <name evidence="1" type="primary">metG</name>
    <name type="ordered locus">BMA10247_1617</name>
</gene>
<protein>
    <recommendedName>
        <fullName evidence="1">Methionine--tRNA ligase</fullName>
        <ecNumber evidence="1">6.1.1.10</ecNumber>
    </recommendedName>
    <alternativeName>
        <fullName evidence="1">Methionyl-tRNA synthetase</fullName>
        <shortName evidence="1">MetRS</shortName>
    </alternativeName>
</protein>
<accession>A3MLM5</accession>
<keyword id="KW-0030">Aminoacyl-tRNA synthetase</keyword>
<keyword id="KW-0067">ATP-binding</keyword>
<keyword id="KW-0963">Cytoplasm</keyword>
<keyword id="KW-0436">Ligase</keyword>
<keyword id="KW-0479">Metal-binding</keyword>
<keyword id="KW-0547">Nucleotide-binding</keyword>
<keyword id="KW-0648">Protein biosynthesis</keyword>
<keyword id="KW-0694">RNA-binding</keyword>
<keyword id="KW-0820">tRNA-binding</keyword>
<keyword id="KW-0862">Zinc</keyword>
<feature type="chain" id="PRO_0000331791" description="Methionine--tRNA ligase">
    <location>
        <begin position="1"/>
        <end position="725"/>
    </location>
</feature>
<feature type="domain" description="tRNA-binding" evidence="1">
    <location>
        <begin position="619"/>
        <end position="725"/>
    </location>
</feature>
<feature type="short sequence motif" description="'HIGH' region">
    <location>
        <begin position="27"/>
        <end position="37"/>
    </location>
</feature>
<feature type="short sequence motif" description="'KMSKS' region">
    <location>
        <begin position="348"/>
        <end position="352"/>
    </location>
</feature>
<feature type="binding site" evidence="1">
    <location>
        <position position="158"/>
    </location>
    <ligand>
        <name>Zn(2+)</name>
        <dbReference type="ChEBI" id="CHEBI:29105"/>
    </ligand>
</feature>
<feature type="binding site" evidence="1">
    <location>
        <position position="161"/>
    </location>
    <ligand>
        <name>Zn(2+)</name>
        <dbReference type="ChEBI" id="CHEBI:29105"/>
    </ligand>
</feature>
<feature type="binding site" evidence="1">
    <location>
        <position position="171"/>
    </location>
    <ligand>
        <name>Zn(2+)</name>
        <dbReference type="ChEBI" id="CHEBI:29105"/>
    </ligand>
</feature>
<feature type="binding site" evidence="1">
    <location>
        <position position="174"/>
    </location>
    <ligand>
        <name>Zn(2+)</name>
        <dbReference type="ChEBI" id="CHEBI:29105"/>
    </ligand>
</feature>
<feature type="binding site" evidence="1">
    <location>
        <position position="351"/>
    </location>
    <ligand>
        <name>ATP</name>
        <dbReference type="ChEBI" id="CHEBI:30616"/>
    </ligand>
</feature>
<comment type="function">
    <text evidence="1">Is required not only for elongation of protein synthesis but also for the initiation of all mRNA translation through initiator tRNA(fMet) aminoacylation.</text>
</comment>
<comment type="catalytic activity">
    <reaction evidence="1">
        <text>tRNA(Met) + L-methionine + ATP = L-methionyl-tRNA(Met) + AMP + diphosphate</text>
        <dbReference type="Rhea" id="RHEA:13481"/>
        <dbReference type="Rhea" id="RHEA-COMP:9667"/>
        <dbReference type="Rhea" id="RHEA-COMP:9698"/>
        <dbReference type="ChEBI" id="CHEBI:30616"/>
        <dbReference type="ChEBI" id="CHEBI:33019"/>
        <dbReference type="ChEBI" id="CHEBI:57844"/>
        <dbReference type="ChEBI" id="CHEBI:78442"/>
        <dbReference type="ChEBI" id="CHEBI:78530"/>
        <dbReference type="ChEBI" id="CHEBI:456215"/>
        <dbReference type="EC" id="6.1.1.10"/>
    </reaction>
</comment>
<comment type="cofactor">
    <cofactor evidence="1">
        <name>Zn(2+)</name>
        <dbReference type="ChEBI" id="CHEBI:29105"/>
    </cofactor>
    <text evidence="1">Binds 1 zinc ion per subunit.</text>
</comment>
<comment type="subunit">
    <text evidence="1">Homodimer.</text>
</comment>
<comment type="subcellular location">
    <subcellularLocation>
        <location evidence="1">Cytoplasm</location>
    </subcellularLocation>
</comment>
<comment type="similarity">
    <text evidence="1">Belongs to the class-I aminoacyl-tRNA synthetase family. MetG type 1 subfamily.</text>
</comment>
<comment type="sequence caution" evidence="2">
    <conflict type="erroneous initiation">
        <sequence resource="EMBL-CDS" id="ABO06727"/>
    </conflict>
</comment>
<reference key="1">
    <citation type="journal article" date="2010" name="Genome Biol. Evol.">
        <title>Continuing evolution of Burkholderia mallei through genome reduction and large-scale rearrangements.</title>
        <authorList>
            <person name="Losada L."/>
            <person name="Ronning C.M."/>
            <person name="DeShazer D."/>
            <person name="Woods D."/>
            <person name="Fedorova N."/>
            <person name="Kim H.S."/>
            <person name="Shabalina S.A."/>
            <person name="Pearson T.R."/>
            <person name="Brinkac L."/>
            <person name="Tan P."/>
            <person name="Nandi T."/>
            <person name="Crabtree J."/>
            <person name="Badger J."/>
            <person name="Beckstrom-Sternberg S."/>
            <person name="Saqib M."/>
            <person name="Schutzer S.E."/>
            <person name="Keim P."/>
            <person name="Nierman W.C."/>
        </authorList>
    </citation>
    <scope>NUCLEOTIDE SEQUENCE [LARGE SCALE GENOMIC DNA]</scope>
    <source>
        <strain>NCTC 10247</strain>
    </source>
</reference>